<keyword id="KW-0007">Acetylation</keyword>
<keyword id="KW-0963">Cytoplasm</keyword>
<keyword id="KW-1185">Reference proteome</keyword>
<gene>
    <name type="primary">cdv3</name>
    <name type="ORF">TGas130k19.1</name>
</gene>
<accession>Q6DIS2</accession>
<organism>
    <name type="scientific">Xenopus tropicalis</name>
    <name type="common">Western clawed frog</name>
    <name type="synonym">Silurana tropicalis</name>
    <dbReference type="NCBI Taxonomy" id="8364"/>
    <lineage>
        <taxon>Eukaryota</taxon>
        <taxon>Metazoa</taxon>
        <taxon>Chordata</taxon>
        <taxon>Craniata</taxon>
        <taxon>Vertebrata</taxon>
        <taxon>Euteleostomi</taxon>
        <taxon>Amphibia</taxon>
        <taxon>Batrachia</taxon>
        <taxon>Anura</taxon>
        <taxon>Pipoidea</taxon>
        <taxon>Pipidae</taxon>
        <taxon>Xenopodinae</taxon>
        <taxon>Xenopus</taxon>
        <taxon>Silurana</taxon>
    </lineage>
</organism>
<dbReference type="EMBL" id="CR926414">
    <property type="protein sequence ID" value="CAJ83431.1"/>
    <property type="molecule type" value="mRNA"/>
</dbReference>
<dbReference type="EMBL" id="BC075463">
    <property type="protein sequence ID" value="AAH75463.1"/>
    <property type="molecule type" value="mRNA"/>
</dbReference>
<dbReference type="RefSeq" id="NP_001004958.1">
    <property type="nucleotide sequence ID" value="NM_001004958.2"/>
</dbReference>
<dbReference type="FunCoup" id="Q6DIS2">
    <property type="interactions" value="2064"/>
</dbReference>
<dbReference type="STRING" id="8364.ENSXETP00000030344"/>
<dbReference type="DNASU" id="448377"/>
<dbReference type="GeneID" id="448377"/>
<dbReference type="KEGG" id="xtr:448377"/>
<dbReference type="AGR" id="Xenbase:XB-GENE-5805319"/>
<dbReference type="CTD" id="55573"/>
<dbReference type="Xenbase" id="XB-GENE-5805319">
    <property type="gene designation" value="cdv3"/>
</dbReference>
<dbReference type="eggNOG" id="ENOG502QRFT">
    <property type="taxonomic scope" value="Eukaryota"/>
</dbReference>
<dbReference type="HOGENOM" id="CLU_089760_1_0_1"/>
<dbReference type="InParanoid" id="Q6DIS2"/>
<dbReference type="OrthoDB" id="6288097at2759"/>
<dbReference type="Proteomes" id="UP000008143">
    <property type="component" value="Chromosome 6"/>
</dbReference>
<dbReference type="Bgee" id="ENSXETG00000001859">
    <property type="expression patterns" value="Expressed in ovary and 16 other cell types or tissues"/>
</dbReference>
<dbReference type="GO" id="GO:0005737">
    <property type="term" value="C:cytoplasm"/>
    <property type="evidence" value="ECO:0007669"/>
    <property type="project" value="UniProtKB-SubCell"/>
</dbReference>
<dbReference type="InterPro" id="IPR026806">
    <property type="entry name" value="CDV3"/>
</dbReference>
<dbReference type="PANTHER" id="PTHR16284">
    <property type="entry name" value="PROTEIN CDV3 HOMOLOG"/>
    <property type="match status" value="1"/>
</dbReference>
<dbReference type="PANTHER" id="PTHR16284:SF13">
    <property type="entry name" value="PROTEIN CDV3 HOMOLOG"/>
    <property type="match status" value="1"/>
</dbReference>
<dbReference type="Pfam" id="PF15359">
    <property type="entry name" value="CDV3"/>
    <property type="match status" value="1"/>
</dbReference>
<evidence type="ECO:0000250" key="1"/>
<evidence type="ECO:0000256" key="2">
    <source>
        <dbReference type="SAM" id="MobiDB-lite"/>
    </source>
</evidence>
<evidence type="ECO:0000305" key="3"/>
<comment type="subcellular location">
    <subcellularLocation>
        <location evidence="1">Cytoplasm</location>
    </subcellularLocation>
</comment>
<comment type="similarity">
    <text evidence="3">Belongs to the CDV3 family.</text>
</comment>
<feature type="initiator methionine" description="Removed" evidence="1">
    <location>
        <position position="1"/>
    </location>
</feature>
<feature type="chain" id="PRO_0000299567" description="Protein CDV3 homolog">
    <location>
        <begin position="2"/>
        <end position="244"/>
    </location>
</feature>
<feature type="region of interest" description="Disordered" evidence="2">
    <location>
        <begin position="1"/>
        <end position="144"/>
    </location>
</feature>
<feature type="region of interest" description="Disordered" evidence="2">
    <location>
        <begin position="156"/>
        <end position="207"/>
    </location>
</feature>
<feature type="compositionally biased region" description="Basic and acidic residues" evidence="2">
    <location>
        <begin position="1"/>
        <end position="15"/>
    </location>
</feature>
<feature type="compositionally biased region" description="Low complexity" evidence="2">
    <location>
        <begin position="39"/>
        <end position="56"/>
    </location>
</feature>
<feature type="compositionally biased region" description="Basic and acidic residues" evidence="2">
    <location>
        <begin position="61"/>
        <end position="77"/>
    </location>
</feature>
<feature type="compositionally biased region" description="Polar residues" evidence="2">
    <location>
        <begin position="131"/>
        <end position="144"/>
    </location>
</feature>
<feature type="compositionally biased region" description="Polar residues" evidence="2">
    <location>
        <begin position="185"/>
        <end position="194"/>
    </location>
</feature>
<feature type="compositionally biased region" description="Basic and acidic residues" evidence="2">
    <location>
        <begin position="197"/>
        <end position="207"/>
    </location>
</feature>
<feature type="modified residue" description="N-acetylalanine" evidence="1">
    <location>
        <position position="2"/>
    </location>
</feature>
<proteinExistence type="evidence at transcript level"/>
<sequence>MAEPEGRSLDDFFAKRDKKKKKDKGGPVSAAGSRGATRPPDGAPSSFSSSASSMSGAGKGIKKEKSGKSENPDQLQEKEDDEWKEFEQKEVDYSGLRIQSLQISNEKDDDEYEKKEEQGADWEDIGGCGTDKSSGPWNKTAQAQAPISAVIEAPEPVHTGGVYRPPAARASVATRKPQGPPEIFSDTQFPSLQATAKHIESRRDKEMEKTFEVVKHKNRARDEAAKNQALRLQLDNQYAVLGEQ</sequence>
<protein>
    <recommendedName>
        <fullName>Protein CDV3 homolog</fullName>
    </recommendedName>
</protein>
<name>CDV3_XENTR</name>
<reference key="1">
    <citation type="submission" date="2006-10" db="EMBL/GenBank/DDBJ databases">
        <authorList>
            <consortium name="Sanger Xenopus tropicalis EST/cDNA project"/>
        </authorList>
    </citation>
    <scope>NUCLEOTIDE SEQUENCE [LARGE SCALE MRNA]</scope>
    <source>
        <tissue>Gastrula</tissue>
    </source>
</reference>
<reference key="2">
    <citation type="submission" date="2004-06" db="EMBL/GenBank/DDBJ databases">
        <authorList>
            <consortium name="NIH - Xenopus Gene Collection (XGC) project"/>
        </authorList>
    </citation>
    <scope>NUCLEOTIDE SEQUENCE [LARGE SCALE MRNA]</scope>
    <source>
        <tissue>Embryo</tissue>
    </source>
</reference>